<accession>B0TQA4</accession>
<name>RIMP_SHEHH</name>
<gene>
    <name evidence="1" type="primary">rimP</name>
    <name type="ordered locus">Shal_3149</name>
</gene>
<protein>
    <recommendedName>
        <fullName evidence="1">Ribosome maturation factor RimP</fullName>
    </recommendedName>
</protein>
<organism>
    <name type="scientific">Shewanella halifaxensis (strain HAW-EB4)</name>
    <dbReference type="NCBI Taxonomy" id="458817"/>
    <lineage>
        <taxon>Bacteria</taxon>
        <taxon>Pseudomonadati</taxon>
        <taxon>Pseudomonadota</taxon>
        <taxon>Gammaproteobacteria</taxon>
        <taxon>Alteromonadales</taxon>
        <taxon>Shewanellaceae</taxon>
        <taxon>Shewanella</taxon>
    </lineage>
</organism>
<evidence type="ECO:0000255" key="1">
    <source>
        <dbReference type="HAMAP-Rule" id="MF_01077"/>
    </source>
</evidence>
<sequence length="151" mass="16622">MATLERKLVEMLKAPVEALGHQLWGLEYIQAGKHSILRLYIDNEKGIFIEDCAEASRQVSAVLDVEDPITSEYTLEVSSPGVERLLFTAEQYKAYIGETVKVQLTMPVAGSRNLKGTVTGVDGQMLNLSVDGNELIVALDNIRKGNLIAKF</sequence>
<dbReference type="EMBL" id="CP000931">
    <property type="protein sequence ID" value="ABZ77696.1"/>
    <property type="molecule type" value="Genomic_DNA"/>
</dbReference>
<dbReference type="RefSeq" id="WP_012278220.1">
    <property type="nucleotide sequence ID" value="NC_010334.1"/>
</dbReference>
<dbReference type="SMR" id="B0TQA4"/>
<dbReference type="STRING" id="458817.Shal_3149"/>
<dbReference type="KEGG" id="shl:Shal_3149"/>
<dbReference type="eggNOG" id="COG0779">
    <property type="taxonomic scope" value="Bacteria"/>
</dbReference>
<dbReference type="HOGENOM" id="CLU_070525_1_1_6"/>
<dbReference type="OrthoDB" id="9805006at2"/>
<dbReference type="Proteomes" id="UP000001317">
    <property type="component" value="Chromosome"/>
</dbReference>
<dbReference type="GO" id="GO:0005829">
    <property type="term" value="C:cytosol"/>
    <property type="evidence" value="ECO:0007669"/>
    <property type="project" value="TreeGrafter"/>
</dbReference>
<dbReference type="GO" id="GO:0000028">
    <property type="term" value="P:ribosomal small subunit assembly"/>
    <property type="evidence" value="ECO:0007669"/>
    <property type="project" value="TreeGrafter"/>
</dbReference>
<dbReference type="GO" id="GO:0006412">
    <property type="term" value="P:translation"/>
    <property type="evidence" value="ECO:0007669"/>
    <property type="project" value="TreeGrafter"/>
</dbReference>
<dbReference type="CDD" id="cd01734">
    <property type="entry name" value="YlxS_C"/>
    <property type="match status" value="1"/>
</dbReference>
<dbReference type="FunFam" id="3.30.300.70:FF:000001">
    <property type="entry name" value="Ribosome maturation factor RimP"/>
    <property type="match status" value="1"/>
</dbReference>
<dbReference type="Gene3D" id="2.30.30.180">
    <property type="entry name" value="Ribosome maturation factor RimP, C-terminal domain"/>
    <property type="match status" value="1"/>
</dbReference>
<dbReference type="Gene3D" id="3.30.300.70">
    <property type="entry name" value="RimP-like superfamily, N-terminal"/>
    <property type="match status" value="1"/>
</dbReference>
<dbReference type="HAMAP" id="MF_01077">
    <property type="entry name" value="RimP"/>
    <property type="match status" value="1"/>
</dbReference>
<dbReference type="InterPro" id="IPR003728">
    <property type="entry name" value="Ribosome_maturation_RimP"/>
</dbReference>
<dbReference type="InterPro" id="IPR028998">
    <property type="entry name" value="RimP_C"/>
</dbReference>
<dbReference type="InterPro" id="IPR036847">
    <property type="entry name" value="RimP_C_sf"/>
</dbReference>
<dbReference type="InterPro" id="IPR028989">
    <property type="entry name" value="RimP_N"/>
</dbReference>
<dbReference type="InterPro" id="IPR035956">
    <property type="entry name" value="RimP_N_sf"/>
</dbReference>
<dbReference type="NCBIfam" id="NF000927">
    <property type="entry name" value="PRK00092.1-1"/>
    <property type="match status" value="1"/>
</dbReference>
<dbReference type="PANTHER" id="PTHR33867">
    <property type="entry name" value="RIBOSOME MATURATION FACTOR RIMP"/>
    <property type="match status" value="1"/>
</dbReference>
<dbReference type="PANTHER" id="PTHR33867:SF1">
    <property type="entry name" value="RIBOSOME MATURATION FACTOR RIMP"/>
    <property type="match status" value="1"/>
</dbReference>
<dbReference type="Pfam" id="PF17384">
    <property type="entry name" value="DUF150_C"/>
    <property type="match status" value="1"/>
</dbReference>
<dbReference type="Pfam" id="PF02576">
    <property type="entry name" value="RimP_N"/>
    <property type="match status" value="1"/>
</dbReference>
<dbReference type="SUPFAM" id="SSF74942">
    <property type="entry name" value="YhbC-like, C-terminal domain"/>
    <property type="match status" value="1"/>
</dbReference>
<dbReference type="SUPFAM" id="SSF75420">
    <property type="entry name" value="YhbC-like, N-terminal domain"/>
    <property type="match status" value="1"/>
</dbReference>
<proteinExistence type="inferred from homology"/>
<reference key="1">
    <citation type="submission" date="2008-01" db="EMBL/GenBank/DDBJ databases">
        <title>Complete sequence of Shewanella halifaxensis HAW-EB4.</title>
        <authorList>
            <consortium name="US DOE Joint Genome Institute"/>
            <person name="Copeland A."/>
            <person name="Lucas S."/>
            <person name="Lapidus A."/>
            <person name="Glavina del Rio T."/>
            <person name="Dalin E."/>
            <person name="Tice H."/>
            <person name="Bruce D."/>
            <person name="Goodwin L."/>
            <person name="Pitluck S."/>
            <person name="Sims D."/>
            <person name="Brettin T."/>
            <person name="Detter J.C."/>
            <person name="Han C."/>
            <person name="Kuske C.R."/>
            <person name="Schmutz J."/>
            <person name="Larimer F."/>
            <person name="Land M."/>
            <person name="Hauser L."/>
            <person name="Kyrpides N."/>
            <person name="Kim E."/>
            <person name="Zhao J.-S."/>
            <person name="Richardson P."/>
        </authorList>
    </citation>
    <scope>NUCLEOTIDE SEQUENCE [LARGE SCALE GENOMIC DNA]</scope>
    <source>
        <strain>HAW-EB4</strain>
    </source>
</reference>
<feature type="chain" id="PRO_1000084534" description="Ribosome maturation factor RimP">
    <location>
        <begin position="1"/>
        <end position="151"/>
    </location>
</feature>
<keyword id="KW-0963">Cytoplasm</keyword>
<keyword id="KW-0690">Ribosome biogenesis</keyword>
<comment type="function">
    <text evidence="1">Required for maturation of 30S ribosomal subunits.</text>
</comment>
<comment type="subcellular location">
    <subcellularLocation>
        <location evidence="1">Cytoplasm</location>
    </subcellularLocation>
</comment>
<comment type="similarity">
    <text evidence="1">Belongs to the RimP family.</text>
</comment>